<keyword id="KW-0963">Cytoplasm</keyword>
<keyword id="KW-0489">Methyltransferase</keyword>
<keyword id="KW-0545">Nucleotide biosynthesis</keyword>
<keyword id="KW-0808">Transferase</keyword>
<reference key="1">
    <citation type="journal article" date="2010" name="Genome Biol.">
        <title>Structure and dynamics of the pan-genome of Streptococcus pneumoniae and closely related species.</title>
        <authorList>
            <person name="Donati C."/>
            <person name="Hiller N.L."/>
            <person name="Tettelin H."/>
            <person name="Muzzi A."/>
            <person name="Croucher N.J."/>
            <person name="Angiuoli S.V."/>
            <person name="Oggioni M."/>
            <person name="Dunning Hotopp J.C."/>
            <person name="Hu F.Z."/>
            <person name="Riley D.R."/>
            <person name="Covacci A."/>
            <person name="Mitchell T.J."/>
            <person name="Bentley S.D."/>
            <person name="Kilian M."/>
            <person name="Ehrlich G.D."/>
            <person name="Rappuoli R."/>
            <person name="Moxon E.R."/>
            <person name="Masignani V."/>
        </authorList>
    </citation>
    <scope>NUCLEOTIDE SEQUENCE [LARGE SCALE GENOMIC DNA]</scope>
    <source>
        <strain>70585</strain>
    </source>
</reference>
<dbReference type="EC" id="2.1.1.45" evidence="1"/>
<dbReference type="EMBL" id="CP000918">
    <property type="protein sequence ID" value="ACO17706.1"/>
    <property type="molecule type" value="Genomic_DNA"/>
</dbReference>
<dbReference type="RefSeq" id="WP_000158639.1">
    <property type="nucleotide sequence ID" value="NC_012468.1"/>
</dbReference>
<dbReference type="SMR" id="C1C631"/>
<dbReference type="KEGG" id="snm:SP70585_0728"/>
<dbReference type="HOGENOM" id="CLU_021669_0_0_9"/>
<dbReference type="UniPathway" id="UPA00575"/>
<dbReference type="Proteomes" id="UP000002211">
    <property type="component" value="Chromosome"/>
</dbReference>
<dbReference type="GO" id="GO:0005829">
    <property type="term" value="C:cytosol"/>
    <property type="evidence" value="ECO:0007669"/>
    <property type="project" value="TreeGrafter"/>
</dbReference>
<dbReference type="GO" id="GO:0004799">
    <property type="term" value="F:thymidylate synthase activity"/>
    <property type="evidence" value="ECO:0007669"/>
    <property type="project" value="UniProtKB-UniRule"/>
</dbReference>
<dbReference type="GO" id="GO:0006231">
    <property type="term" value="P:dTMP biosynthetic process"/>
    <property type="evidence" value="ECO:0007669"/>
    <property type="project" value="UniProtKB-UniRule"/>
</dbReference>
<dbReference type="GO" id="GO:0006235">
    <property type="term" value="P:dTTP biosynthetic process"/>
    <property type="evidence" value="ECO:0007669"/>
    <property type="project" value="UniProtKB-UniRule"/>
</dbReference>
<dbReference type="GO" id="GO:0032259">
    <property type="term" value="P:methylation"/>
    <property type="evidence" value="ECO:0007669"/>
    <property type="project" value="UniProtKB-KW"/>
</dbReference>
<dbReference type="CDD" id="cd00351">
    <property type="entry name" value="TS_Pyrimidine_HMase"/>
    <property type="match status" value="1"/>
</dbReference>
<dbReference type="FunFam" id="3.30.572.10:FF:000006">
    <property type="entry name" value="Thymidylate synthase"/>
    <property type="match status" value="1"/>
</dbReference>
<dbReference type="Gene3D" id="3.30.572.10">
    <property type="entry name" value="Thymidylate synthase/dCMP hydroxymethylase domain"/>
    <property type="match status" value="1"/>
</dbReference>
<dbReference type="HAMAP" id="MF_00008">
    <property type="entry name" value="Thymidy_synth_bact"/>
    <property type="match status" value="1"/>
</dbReference>
<dbReference type="InterPro" id="IPR045097">
    <property type="entry name" value="Thymidate_synth/dCMP_Mease"/>
</dbReference>
<dbReference type="InterPro" id="IPR023451">
    <property type="entry name" value="Thymidate_synth/dCMP_Mease_dom"/>
</dbReference>
<dbReference type="InterPro" id="IPR036926">
    <property type="entry name" value="Thymidate_synth/dCMP_Mease_sf"/>
</dbReference>
<dbReference type="InterPro" id="IPR000398">
    <property type="entry name" value="Thymidylate_synthase"/>
</dbReference>
<dbReference type="InterPro" id="IPR020940">
    <property type="entry name" value="Thymidylate_synthase_AS"/>
</dbReference>
<dbReference type="NCBIfam" id="NF002495">
    <property type="entry name" value="PRK01827.1-1"/>
    <property type="match status" value="1"/>
</dbReference>
<dbReference type="PANTHER" id="PTHR11548">
    <property type="entry name" value="THYMIDYLATE SYNTHASE 1"/>
    <property type="match status" value="1"/>
</dbReference>
<dbReference type="PANTHER" id="PTHR11548:SF1">
    <property type="entry name" value="THYMIDYLATE SYNTHASE 1"/>
    <property type="match status" value="1"/>
</dbReference>
<dbReference type="Pfam" id="PF00303">
    <property type="entry name" value="Thymidylat_synt"/>
    <property type="match status" value="1"/>
</dbReference>
<dbReference type="PRINTS" id="PR00108">
    <property type="entry name" value="THYMDSNTHASE"/>
</dbReference>
<dbReference type="SUPFAM" id="SSF55831">
    <property type="entry name" value="Thymidylate synthase/dCMP hydroxymethylase"/>
    <property type="match status" value="1"/>
</dbReference>
<dbReference type="PROSITE" id="PS00091">
    <property type="entry name" value="THYMIDYLATE_SYNTHASE"/>
    <property type="match status" value="1"/>
</dbReference>
<name>TYSY_STRP7</name>
<feature type="chain" id="PRO_1000197261" description="Thymidylate synthase">
    <location>
        <begin position="1"/>
        <end position="279"/>
    </location>
</feature>
<feature type="active site" description="Nucleophile" evidence="1">
    <location>
        <position position="154"/>
    </location>
</feature>
<feature type="binding site" evidence="1">
    <location>
        <begin position="133"/>
        <end position="134"/>
    </location>
    <ligand>
        <name>dUMP</name>
        <dbReference type="ChEBI" id="CHEBI:246422"/>
        <note>ligand shared between dimeric partners</note>
    </ligand>
</feature>
<feature type="binding site" description="in other chain" evidence="1">
    <location>
        <begin position="178"/>
        <end position="181"/>
    </location>
    <ligand>
        <name>dUMP</name>
        <dbReference type="ChEBI" id="CHEBI:246422"/>
        <note>ligand shared between dimeric partners</note>
    </ligand>
</feature>
<feature type="binding site" evidence="1">
    <location>
        <position position="181"/>
    </location>
    <ligand>
        <name>(6R)-5,10-methylene-5,6,7,8-tetrahydrofolate</name>
        <dbReference type="ChEBI" id="CHEBI:15636"/>
    </ligand>
</feature>
<feature type="binding site" description="in other chain" evidence="1">
    <location>
        <position position="189"/>
    </location>
    <ligand>
        <name>dUMP</name>
        <dbReference type="ChEBI" id="CHEBI:246422"/>
        <note>ligand shared between dimeric partners</note>
    </ligand>
</feature>
<feature type="binding site" description="in other chain" evidence="1">
    <location>
        <begin position="219"/>
        <end position="221"/>
    </location>
    <ligand>
        <name>dUMP</name>
        <dbReference type="ChEBI" id="CHEBI:246422"/>
        <note>ligand shared between dimeric partners</note>
    </ligand>
</feature>
<feature type="binding site" evidence="1">
    <location>
        <position position="278"/>
    </location>
    <ligand>
        <name>(6R)-5,10-methylene-5,6,7,8-tetrahydrofolate</name>
        <dbReference type="ChEBI" id="CHEBI:15636"/>
    </ligand>
</feature>
<accession>C1C631</accession>
<evidence type="ECO:0000255" key="1">
    <source>
        <dbReference type="HAMAP-Rule" id="MF_00008"/>
    </source>
</evidence>
<gene>
    <name evidence="1" type="primary">thyA</name>
    <name type="ordered locus">SP70585_0728</name>
</gene>
<organism>
    <name type="scientific">Streptococcus pneumoniae (strain 70585)</name>
    <dbReference type="NCBI Taxonomy" id="488221"/>
    <lineage>
        <taxon>Bacteria</taxon>
        <taxon>Bacillati</taxon>
        <taxon>Bacillota</taxon>
        <taxon>Bacilli</taxon>
        <taxon>Lactobacillales</taxon>
        <taxon>Streptococcaceae</taxon>
        <taxon>Streptococcus</taxon>
    </lineage>
</organism>
<protein>
    <recommendedName>
        <fullName evidence="1">Thymidylate synthase</fullName>
        <shortName evidence="1">TS</shortName>
        <shortName evidence="1">TSase</shortName>
        <ecNumber evidence="1">2.1.1.45</ecNumber>
    </recommendedName>
</protein>
<proteinExistence type="inferred from homology"/>
<comment type="function">
    <text evidence="1">Catalyzes the reductive methylation of 2'-deoxyuridine-5'-monophosphate (dUMP) to 2'-deoxythymidine-5'-monophosphate (dTMP) while utilizing 5,10-methylenetetrahydrofolate (mTHF) as the methyl donor and reductant in the reaction, yielding dihydrofolate (DHF) as a by-product. This enzymatic reaction provides an intracellular de novo source of dTMP, an essential precursor for DNA biosynthesis.</text>
</comment>
<comment type="catalytic activity">
    <reaction evidence="1">
        <text>dUMP + (6R)-5,10-methylene-5,6,7,8-tetrahydrofolate = 7,8-dihydrofolate + dTMP</text>
        <dbReference type="Rhea" id="RHEA:12104"/>
        <dbReference type="ChEBI" id="CHEBI:15636"/>
        <dbReference type="ChEBI" id="CHEBI:57451"/>
        <dbReference type="ChEBI" id="CHEBI:63528"/>
        <dbReference type="ChEBI" id="CHEBI:246422"/>
        <dbReference type="EC" id="2.1.1.45"/>
    </reaction>
</comment>
<comment type="pathway">
    <text evidence="1">Pyrimidine metabolism; dTTP biosynthesis.</text>
</comment>
<comment type="subunit">
    <text evidence="1">Homodimer.</text>
</comment>
<comment type="subcellular location">
    <subcellularLocation>
        <location evidence="1">Cytoplasm</location>
    </subcellularLocation>
</comment>
<comment type="similarity">
    <text evidence="1">Belongs to the thymidylate synthase family. Bacterial-type ThyA subfamily.</text>
</comment>
<sequence length="279" mass="32554">MTKADTIFKENIERILKEGVFSEQARPKYKDGTVANSKYVTGAFSEYDLSKGEFPITTLRPIAIKSAIKEVLWIYQDQSNSLEVLNDKYNVHYWNDWEVGDTGTIGERYGAVVKKHDIINKLLKQLETNPWNRRNIISLWDYQAFEETDGLLPCAFQTMFDVRRVDGEIYLDATLTQRSNDMLVAHHINAMQYVALQMMIAKHFGWKVGKFFYFINNLHIYDNQFEQAQELLRREPSNCQPRLVLNVPDGTNFFDIKAEDFELVDYDPVKPQLKFDLAI</sequence>